<gene>
    <name evidence="1" type="primary">atpE</name>
</gene>
<evidence type="ECO:0000255" key="1">
    <source>
        <dbReference type="HAMAP-Rule" id="MF_00530"/>
    </source>
</evidence>
<evidence type="ECO:0007829" key="2">
    <source>
        <dbReference type="PDB" id="6FKF"/>
    </source>
</evidence>
<proteinExistence type="evidence at protein level"/>
<sequence length="134" mass="14700">MTLNLCVLTPNRSIWNSEVKEIILSTNSGQIGVLPNHAPTATAVDIGILRIRLNDQWLTLALMGGFARIGNNEITILVNDAERGSDIDPQEAQQTLEIAEANLRKAEGKRQKIEANLALRRARTRVEASNTISS</sequence>
<reference key="1">
    <citation type="journal article" date="1982" name="Proc. Natl. Acad. Sci. U.S.A.">
        <title>Structures of the genes for the beta and epsilon subunits of spinach chloroplast ATPase indicate a dicistronic mRNA and an overlapping translation stop/start signal.</title>
        <authorList>
            <person name="Zurawski G."/>
            <person name="Bottomley W."/>
            <person name="Whitfeld P.R."/>
        </authorList>
    </citation>
    <scope>NUCLEOTIDE SEQUENCE [GENOMIC DNA]</scope>
</reference>
<reference key="2">
    <citation type="journal article" date="2001" name="Plant Mol. Biol.">
        <title>The plastid chromosome of spinach (Spinacia oleracea): complete nucleotide sequence and gene organization.</title>
        <authorList>
            <person name="Schmitz-Linneweber C."/>
            <person name="Maier R.M."/>
            <person name="Alcaraz J.-P."/>
            <person name="Cottet A."/>
            <person name="Herrmann R.G."/>
            <person name="Mache R."/>
        </authorList>
    </citation>
    <scope>NUCLEOTIDE SEQUENCE [LARGE SCALE GENOMIC DNA]</scope>
    <source>
        <strain>cv. Geant d'hiver</strain>
        <strain>cv. Monatol</strain>
    </source>
</reference>
<dbReference type="EMBL" id="J01441">
    <property type="protein sequence ID" value="AAA84627.1"/>
    <property type="molecule type" value="Genomic_DNA"/>
</dbReference>
<dbReference type="EMBL" id="AJ400848">
    <property type="protein sequence ID" value="CAB88735.1"/>
    <property type="molecule type" value="Genomic_DNA"/>
</dbReference>
<dbReference type="PIR" id="A01034">
    <property type="entry name" value="PWSPE"/>
</dbReference>
<dbReference type="RefSeq" id="NP_054942.1">
    <property type="nucleotide sequence ID" value="NC_002202.1"/>
</dbReference>
<dbReference type="PDB" id="2RQ7">
    <property type="method" value="NMR"/>
    <property type="chains" value="A=89-134"/>
</dbReference>
<dbReference type="PDB" id="6FKF">
    <property type="method" value="EM"/>
    <property type="resolution" value="3.10 A"/>
    <property type="chains" value="e=1-134"/>
</dbReference>
<dbReference type="PDB" id="6FKH">
    <property type="method" value="EM"/>
    <property type="resolution" value="4.20 A"/>
    <property type="chains" value="e=1-134"/>
</dbReference>
<dbReference type="PDB" id="6FKI">
    <property type="method" value="EM"/>
    <property type="resolution" value="4.30 A"/>
    <property type="chains" value="e=1-134"/>
</dbReference>
<dbReference type="PDB" id="6VM1">
    <property type="method" value="EM"/>
    <property type="resolution" value="7.90 A"/>
    <property type="chains" value="e=1-134"/>
</dbReference>
<dbReference type="PDB" id="6VM4">
    <property type="method" value="EM"/>
    <property type="resolution" value="7.08 A"/>
    <property type="chains" value="e=1-134"/>
</dbReference>
<dbReference type="PDB" id="6VMB">
    <property type="method" value="EM"/>
    <property type="resolution" value="5.23 A"/>
    <property type="chains" value="e=1-134"/>
</dbReference>
<dbReference type="PDB" id="6VMD">
    <property type="method" value="EM"/>
    <property type="resolution" value="4.53 A"/>
    <property type="chains" value="e=1-134"/>
</dbReference>
<dbReference type="PDB" id="6VMG">
    <property type="method" value="EM"/>
    <property type="resolution" value="6.46 A"/>
    <property type="chains" value="e=1-134"/>
</dbReference>
<dbReference type="PDB" id="6VOF">
    <property type="method" value="EM"/>
    <property type="resolution" value="4.51 A"/>
    <property type="chains" value="e=1-134"/>
</dbReference>
<dbReference type="PDB" id="6VOG">
    <property type="method" value="EM"/>
    <property type="resolution" value="4.35 A"/>
    <property type="chains" value="e=1-134"/>
</dbReference>
<dbReference type="PDB" id="6VOH">
    <property type="method" value="EM"/>
    <property type="resolution" value="4.16 A"/>
    <property type="chains" value="e=1-134"/>
</dbReference>
<dbReference type="PDB" id="6VOI">
    <property type="method" value="EM"/>
    <property type="resolution" value="4.03 A"/>
    <property type="chains" value="e=1-134"/>
</dbReference>
<dbReference type="PDB" id="6VOJ">
    <property type="method" value="EM"/>
    <property type="resolution" value="4.34 A"/>
    <property type="chains" value="e=1-134"/>
</dbReference>
<dbReference type="PDB" id="6VOK">
    <property type="method" value="EM"/>
    <property type="resolution" value="3.85 A"/>
    <property type="chains" value="e=1-134"/>
</dbReference>
<dbReference type="PDB" id="6VOL">
    <property type="method" value="EM"/>
    <property type="resolution" value="4.06 A"/>
    <property type="chains" value="e=1-134"/>
</dbReference>
<dbReference type="PDB" id="6VOM">
    <property type="method" value="EM"/>
    <property type="resolution" value="3.60 A"/>
    <property type="chains" value="e=1-134"/>
</dbReference>
<dbReference type="PDB" id="6VON">
    <property type="method" value="EM"/>
    <property type="resolution" value="3.35 A"/>
    <property type="chains" value="e=1-134"/>
</dbReference>
<dbReference type="PDB" id="6VOO">
    <property type="method" value="EM"/>
    <property type="resolution" value="3.05 A"/>
    <property type="chains" value="e=1-134"/>
</dbReference>
<dbReference type="PDBsum" id="2RQ7"/>
<dbReference type="PDBsum" id="6FKF"/>
<dbReference type="PDBsum" id="6FKH"/>
<dbReference type="PDBsum" id="6FKI"/>
<dbReference type="PDBsum" id="6VM1"/>
<dbReference type="PDBsum" id="6VM4"/>
<dbReference type="PDBsum" id="6VMB"/>
<dbReference type="PDBsum" id="6VMD"/>
<dbReference type="PDBsum" id="6VMG"/>
<dbReference type="PDBsum" id="6VOF"/>
<dbReference type="PDBsum" id="6VOG"/>
<dbReference type="PDBsum" id="6VOH"/>
<dbReference type="PDBsum" id="6VOI"/>
<dbReference type="PDBsum" id="6VOJ"/>
<dbReference type="PDBsum" id="6VOK"/>
<dbReference type="PDBsum" id="6VOL"/>
<dbReference type="PDBsum" id="6VOM"/>
<dbReference type="PDBsum" id="6VON"/>
<dbReference type="PDBsum" id="6VOO"/>
<dbReference type="EMDB" id="EMD-21235"/>
<dbReference type="EMDB" id="EMD-21238"/>
<dbReference type="EMDB" id="EMD-21239"/>
<dbReference type="EMDB" id="EMD-21240"/>
<dbReference type="EMDB" id="EMD-21241"/>
<dbReference type="EMDB" id="EMD-21262"/>
<dbReference type="EMDB" id="EMD-21263"/>
<dbReference type="EMDB" id="EMD-21264"/>
<dbReference type="EMDB" id="EMD-21265"/>
<dbReference type="EMDB" id="EMD-21266"/>
<dbReference type="EMDB" id="EMD-21267"/>
<dbReference type="EMDB" id="EMD-21268"/>
<dbReference type="EMDB" id="EMD-21269"/>
<dbReference type="EMDB" id="EMD-21270"/>
<dbReference type="EMDB" id="EMD-21271"/>
<dbReference type="EMDB" id="EMD-4270"/>
<dbReference type="EMDB" id="EMD-4271"/>
<dbReference type="EMDB" id="EMD-4272"/>
<dbReference type="SASBDB" id="P00833"/>
<dbReference type="SMR" id="P00833"/>
<dbReference type="FunCoup" id="P00833">
    <property type="interactions" value="245"/>
</dbReference>
<dbReference type="IntAct" id="P00833">
    <property type="interactions" value="1"/>
</dbReference>
<dbReference type="STRING" id="3562.P00833"/>
<dbReference type="ChEMBL" id="CHEMBL2366567"/>
<dbReference type="GeneID" id="2715577"/>
<dbReference type="KEGG" id="soe:2715577"/>
<dbReference type="InParanoid" id="P00833"/>
<dbReference type="OrthoDB" id="423436at2759"/>
<dbReference type="EvolutionaryTrace" id="P00833"/>
<dbReference type="PRO" id="PR:P00833"/>
<dbReference type="Proteomes" id="UP001155700">
    <property type="component" value="Chloroplast Pltd"/>
</dbReference>
<dbReference type="GO" id="GO:0009535">
    <property type="term" value="C:chloroplast thylakoid membrane"/>
    <property type="evidence" value="ECO:0007669"/>
    <property type="project" value="UniProtKB-SubCell"/>
</dbReference>
<dbReference type="GO" id="GO:0045259">
    <property type="term" value="C:proton-transporting ATP synthase complex"/>
    <property type="evidence" value="ECO:0007669"/>
    <property type="project" value="UniProtKB-KW"/>
</dbReference>
<dbReference type="GO" id="GO:0005524">
    <property type="term" value="F:ATP binding"/>
    <property type="evidence" value="ECO:0007669"/>
    <property type="project" value="UniProtKB-UniRule"/>
</dbReference>
<dbReference type="GO" id="GO:0046933">
    <property type="term" value="F:proton-transporting ATP synthase activity, rotational mechanism"/>
    <property type="evidence" value="ECO:0007669"/>
    <property type="project" value="UniProtKB-UniRule"/>
</dbReference>
<dbReference type="GO" id="GO:0015986">
    <property type="term" value="P:proton motive force-driven ATP synthesis"/>
    <property type="evidence" value="ECO:0000318"/>
    <property type="project" value="GO_Central"/>
</dbReference>
<dbReference type="CDD" id="cd12152">
    <property type="entry name" value="F1-ATPase_delta"/>
    <property type="match status" value="1"/>
</dbReference>
<dbReference type="FunFam" id="2.60.15.10:FF:000002">
    <property type="entry name" value="ATP synthase epsilon chain, chloroplastic"/>
    <property type="match status" value="1"/>
</dbReference>
<dbReference type="Gene3D" id="6.10.140.480">
    <property type="match status" value="1"/>
</dbReference>
<dbReference type="Gene3D" id="2.60.15.10">
    <property type="entry name" value="F0F1 ATP synthase delta/epsilon subunit, N-terminal"/>
    <property type="match status" value="1"/>
</dbReference>
<dbReference type="HAMAP" id="MF_00530">
    <property type="entry name" value="ATP_synth_epsil_bac"/>
    <property type="match status" value="1"/>
</dbReference>
<dbReference type="InterPro" id="IPR001469">
    <property type="entry name" value="ATP_synth_F1_dsu/esu"/>
</dbReference>
<dbReference type="InterPro" id="IPR020546">
    <property type="entry name" value="ATP_synth_F1_dsu/esu_N"/>
</dbReference>
<dbReference type="InterPro" id="IPR020547">
    <property type="entry name" value="ATP_synth_F1_esu_C"/>
</dbReference>
<dbReference type="InterPro" id="IPR036771">
    <property type="entry name" value="ATPsynth_dsu/esu_N"/>
</dbReference>
<dbReference type="NCBIfam" id="TIGR01216">
    <property type="entry name" value="ATP_synt_epsi"/>
    <property type="match status" value="1"/>
</dbReference>
<dbReference type="PANTHER" id="PTHR13822">
    <property type="entry name" value="ATP SYNTHASE DELTA/EPSILON CHAIN"/>
    <property type="match status" value="1"/>
</dbReference>
<dbReference type="PANTHER" id="PTHR13822:SF10">
    <property type="entry name" value="ATP SYNTHASE EPSILON CHAIN, CHLOROPLASTIC"/>
    <property type="match status" value="1"/>
</dbReference>
<dbReference type="Pfam" id="PF00401">
    <property type="entry name" value="ATP-synt_DE"/>
    <property type="match status" value="1"/>
</dbReference>
<dbReference type="Pfam" id="PF02823">
    <property type="entry name" value="ATP-synt_DE_N"/>
    <property type="match status" value="1"/>
</dbReference>
<dbReference type="SUPFAM" id="SSF51344">
    <property type="entry name" value="Epsilon subunit of F1F0-ATP synthase N-terminal domain"/>
    <property type="match status" value="1"/>
</dbReference>
<name>ATPE_SPIOL</name>
<keyword id="KW-0002">3D-structure</keyword>
<keyword id="KW-0066">ATP synthesis</keyword>
<keyword id="KW-0139">CF(1)</keyword>
<keyword id="KW-0150">Chloroplast</keyword>
<keyword id="KW-0375">Hydrogen ion transport</keyword>
<keyword id="KW-0406">Ion transport</keyword>
<keyword id="KW-0472">Membrane</keyword>
<keyword id="KW-0934">Plastid</keyword>
<keyword id="KW-1185">Reference proteome</keyword>
<keyword id="KW-0793">Thylakoid</keyword>
<keyword id="KW-0813">Transport</keyword>
<protein>
    <recommendedName>
        <fullName evidence="1">ATP synthase epsilon chain, chloroplastic</fullName>
    </recommendedName>
    <alternativeName>
        <fullName evidence="1">ATP synthase F1 sector epsilon subunit</fullName>
    </alternativeName>
    <alternativeName>
        <fullName evidence="1">F-ATPase epsilon subunit</fullName>
    </alternativeName>
</protein>
<geneLocation type="chloroplast"/>
<feature type="chain" id="PRO_0000188294" description="ATP synthase epsilon chain, chloroplastic">
    <location>
        <begin position="1"/>
        <end position="134"/>
    </location>
</feature>
<feature type="strand" evidence="2">
    <location>
        <begin position="3"/>
        <end position="8"/>
    </location>
</feature>
<feature type="strand" evidence="2">
    <location>
        <begin position="13"/>
        <end position="15"/>
    </location>
</feature>
<feature type="strand" evidence="2">
    <location>
        <begin position="19"/>
        <end position="24"/>
    </location>
</feature>
<feature type="strand" evidence="2">
    <location>
        <begin position="27"/>
        <end position="29"/>
    </location>
</feature>
<feature type="strand" evidence="2">
    <location>
        <begin position="31"/>
        <end position="33"/>
    </location>
</feature>
<feature type="strand" evidence="2">
    <location>
        <begin position="40"/>
        <end position="44"/>
    </location>
</feature>
<feature type="strand" evidence="2">
    <location>
        <begin position="49"/>
        <end position="52"/>
    </location>
</feature>
<feature type="strand" evidence="2">
    <location>
        <begin position="57"/>
        <end position="62"/>
    </location>
</feature>
<feature type="strand" evidence="2">
    <location>
        <begin position="65"/>
        <end position="69"/>
    </location>
</feature>
<feature type="strand" evidence="2">
    <location>
        <begin position="71"/>
        <end position="79"/>
    </location>
</feature>
<feature type="strand" evidence="2">
    <location>
        <begin position="81"/>
        <end position="83"/>
    </location>
</feature>
<feature type="turn" evidence="2">
    <location>
        <begin position="84"/>
        <end position="86"/>
    </location>
</feature>
<feature type="helix" evidence="2">
    <location>
        <begin position="91"/>
        <end position="104"/>
    </location>
</feature>
<feature type="helix" evidence="2">
    <location>
        <begin position="109"/>
        <end position="130"/>
    </location>
</feature>
<organism>
    <name type="scientific">Spinacia oleracea</name>
    <name type="common">Spinach</name>
    <dbReference type="NCBI Taxonomy" id="3562"/>
    <lineage>
        <taxon>Eukaryota</taxon>
        <taxon>Viridiplantae</taxon>
        <taxon>Streptophyta</taxon>
        <taxon>Embryophyta</taxon>
        <taxon>Tracheophyta</taxon>
        <taxon>Spermatophyta</taxon>
        <taxon>Magnoliopsida</taxon>
        <taxon>eudicotyledons</taxon>
        <taxon>Gunneridae</taxon>
        <taxon>Pentapetalae</taxon>
        <taxon>Caryophyllales</taxon>
        <taxon>Chenopodiaceae</taxon>
        <taxon>Chenopodioideae</taxon>
        <taxon>Anserineae</taxon>
        <taxon>Spinacia</taxon>
    </lineage>
</organism>
<comment type="function">
    <text evidence="1">Produces ATP from ADP in the presence of a proton gradient across the membrane.</text>
</comment>
<comment type="subunit">
    <text evidence="1">F-type ATPases have 2 components, CF(1) - the catalytic core - and CF(0) - the membrane proton channel. CF(1) has five subunits: alpha(3), beta(3), gamma(1), delta(1), epsilon(1). CF(0) has three main subunits: a, b and c.</text>
</comment>
<comment type="subcellular location">
    <subcellularLocation>
        <location evidence="1">Plastid</location>
        <location evidence="1">Chloroplast thylakoid membrane</location>
        <topology evidence="1">Peripheral membrane protein</topology>
    </subcellularLocation>
</comment>
<comment type="similarity">
    <text evidence="1">Belongs to the ATPase epsilon chain family.</text>
</comment>
<accession>P00833</accession>